<accession>Q91YD6</accession>
<accession>P97809</accession>
<accession>Q8BIS5</accession>
<accession>Q8R211</accession>
<accession>Q8VDI8</accession>
<keyword id="KW-0117">Actin capping</keyword>
<keyword id="KW-0009">Actin-binding</keyword>
<keyword id="KW-0025">Alternative splicing</keyword>
<keyword id="KW-0106">Calcium</keyword>
<keyword id="KW-1185">Reference proteome</keyword>
<keyword id="KW-0677">Repeat</keyword>
<organism>
    <name type="scientific">Mus musculus</name>
    <name type="common">Mouse</name>
    <dbReference type="NCBI Taxonomy" id="10090"/>
    <lineage>
        <taxon>Eukaryota</taxon>
        <taxon>Metazoa</taxon>
        <taxon>Chordata</taxon>
        <taxon>Craniata</taxon>
        <taxon>Vertebrata</taxon>
        <taxon>Euteleostomi</taxon>
        <taxon>Mammalia</taxon>
        <taxon>Eutheria</taxon>
        <taxon>Euarchontoglires</taxon>
        <taxon>Glires</taxon>
        <taxon>Rodentia</taxon>
        <taxon>Myomorpha</taxon>
        <taxon>Muroidea</taxon>
        <taxon>Muridae</taxon>
        <taxon>Murinae</taxon>
        <taxon>Mus</taxon>
        <taxon>Mus</taxon>
    </lineage>
</organism>
<reference evidence="6 9" key="1">
    <citation type="submission" date="2001-08" db="EMBL/GenBank/DDBJ databases">
        <authorList>
            <person name="Protopopov A."/>
            <person name="Kashuba V."/>
            <person name="Zabarovsky E."/>
        </authorList>
    </citation>
    <scope>NUCLEOTIDE SEQUENCE [MRNA] (ISOFORM 1)</scope>
    <source>
        <strain evidence="9">BALB/cJ</strain>
    </source>
</reference>
<reference key="2">
    <citation type="journal article" date="2005" name="Science">
        <title>The transcriptional landscape of the mammalian genome.</title>
        <authorList>
            <person name="Carninci P."/>
            <person name="Kasukawa T."/>
            <person name="Katayama S."/>
            <person name="Gough J."/>
            <person name="Frith M.C."/>
            <person name="Maeda N."/>
            <person name="Oyama R."/>
            <person name="Ravasi T."/>
            <person name="Lenhard B."/>
            <person name="Wells C."/>
            <person name="Kodzius R."/>
            <person name="Shimokawa K."/>
            <person name="Bajic V.B."/>
            <person name="Brenner S.E."/>
            <person name="Batalov S."/>
            <person name="Forrest A.R."/>
            <person name="Zavolan M."/>
            <person name="Davis M.J."/>
            <person name="Wilming L.G."/>
            <person name="Aidinis V."/>
            <person name="Allen J.E."/>
            <person name="Ambesi-Impiombato A."/>
            <person name="Apweiler R."/>
            <person name="Aturaliya R.N."/>
            <person name="Bailey T.L."/>
            <person name="Bansal M."/>
            <person name="Baxter L."/>
            <person name="Beisel K.W."/>
            <person name="Bersano T."/>
            <person name="Bono H."/>
            <person name="Chalk A.M."/>
            <person name="Chiu K.P."/>
            <person name="Choudhary V."/>
            <person name="Christoffels A."/>
            <person name="Clutterbuck D.R."/>
            <person name="Crowe M.L."/>
            <person name="Dalla E."/>
            <person name="Dalrymple B.P."/>
            <person name="de Bono B."/>
            <person name="Della Gatta G."/>
            <person name="di Bernardo D."/>
            <person name="Down T."/>
            <person name="Engstrom P."/>
            <person name="Fagiolini M."/>
            <person name="Faulkner G."/>
            <person name="Fletcher C.F."/>
            <person name="Fukushima T."/>
            <person name="Furuno M."/>
            <person name="Futaki S."/>
            <person name="Gariboldi M."/>
            <person name="Georgii-Hemming P."/>
            <person name="Gingeras T.R."/>
            <person name="Gojobori T."/>
            <person name="Green R.E."/>
            <person name="Gustincich S."/>
            <person name="Harbers M."/>
            <person name="Hayashi Y."/>
            <person name="Hensch T.K."/>
            <person name="Hirokawa N."/>
            <person name="Hill D."/>
            <person name="Huminiecki L."/>
            <person name="Iacono M."/>
            <person name="Ikeo K."/>
            <person name="Iwama A."/>
            <person name="Ishikawa T."/>
            <person name="Jakt M."/>
            <person name="Kanapin A."/>
            <person name="Katoh M."/>
            <person name="Kawasawa Y."/>
            <person name="Kelso J."/>
            <person name="Kitamura H."/>
            <person name="Kitano H."/>
            <person name="Kollias G."/>
            <person name="Krishnan S.P."/>
            <person name="Kruger A."/>
            <person name="Kummerfeld S.K."/>
            <person name="Kurochkin I.V."/>
            <person name="Lareau L.F."/>
            <person name="Lazarevic D."/>
            <person name="Lipovich L."/>
            <person name="Liu J."/>
            <person name="Liuni S."/>
            <person name="McWilliam S."/>
            <person name="Madan Babu M."/>
            <person name="Madera M."/>
            <person name="Marchionni L."/>
            <person name="Matsuda H."/>
            <person name="Matsuzawa S."/>
            <person name="Miki H."/>
            <person name="Mignone F."/>
            <person name="Miyake S."/>
            <person name="Morris K."/>
            <person name="Mottagui-Tabar S."/>
            <person name="Mulder N."/>
            <person name="Nakano N."/>
            <person name="Nakauchi H."/>
            <person name="Ng P."/>
            <person name="Nilsson R."/>
            <person name="Nishiguchi S."/>
            <person name="Nishikawa S."/>
            <person name="Nori F."/>
            <person name="Ohara O."/>
            <person name="Okazaki Y."/>
            <person name="Orlando V."/>
            <person name="Pang K.C."/>
            <person name="Pavan W.J."/>
            <person name="Pavesi G."/>
            <person name="Pesole G."/>
            <person name="Petrovsky N."/>
            <person name="Piazza S."/>
            <person name="Reed J."/>
            <person name="Reid J.F."/>
            <person name="Ring B.Z."/>
            <person name="Ringwald M."/>
            <person name="Rost B."/>
            <person name="Ruan Y."/>
            <person name="Salzberg S.L."/>
            <person name="Sandelin A."/>
            <person name="Schneider C."/>
            <person name="Schoenbach C."/>
            <person name="Sekiguchi K."/>
            <person name="Semple C.A."/>
            <person name="Seno S."/>
            <person name="Sessa L."/>
            <person name="Sheng Y."/>
            <person name="Shibata Y."/>
            <person name="Shimada H."/>
            <person name="Shimada K."/>
            <person name="Silva D."/>
            <person name="Sinclair B."/>
            <person name="Sperling S."/>
            <person name="Stupka E."/>
            <person name="Sugiura K."/>
            <person name="Sultana R."/>
            <person name="Takenaka Y."/>
            <person name="Taki K."/>
            <person name="Tammoja K."/>
            <person name="Tan S.L."/>
            <person name="Tang S."/>
            <person name="Taylor M.S."/>
            <person name="Tegner J."/>
            <person name="Teichmann S.A."/>
            <person name="Ueda H.R."/>
            <person name="van Nimwegen E."/>
            <person name="Verardo R."/>
            <person name="Wei C.L."/>
            <person name="Yagi K."/>
            <person name="Yamanishi H."/>
            <person name="Zabarovsky E."/>
            <person name="Zhu S."/>
            <person name="Zimmer A."/>
            <person name="Hide W."/>
            <person name="Bult C."/>
            <person name="Grimmond S.M."/>
            <person name="Teasdale R.D."/>
            <person name="Liu E.T."/>
            <person name="Brusic V."/>
            <person name="Quackenbush J."/>
            <person name="Wahlestedt C."/>
            <person name="Mattick J.S."/>
            <person name="Hume D.A."/>
            <person name="Kai C."/>
            <person name="Sasaki D."/>
            <person name="Tomaru Y."/>
            <person name="Fukuda S."/>
            <person name="Kanamori-Katayama M."/>
            <person name="Suzuki M."/>
            <person name="Aoki J."/>
            <person name="Arakawa T."/>
            <person name="Iida J."/>
            <person name="Imamura K."/>
            <person name="Itoh M."/>
            <person name="Kato T."/>
            <person name="Kawaji H."/>
            <person name="Kawagashira N."/>
            <person name="Kawashima T."/>
            <person name="Kojima M."/>
            <person name="Kondo S."/>
            <person name="Konno H."/>
            <person name="Nakano K."/>
            <person name="Ninomiya N."/>
            <person name="Nishio T."/>
            <person name="Okada M."/>
            <person name="Plessy C."/>
            <person name="Shibata K."/>
            <person name="Shiraki T."/>
            <person name="Suzuki S."/>
            <person name="Tagami M."/>
            <person name="Waki K."/>
            <person name="Watahiki A."/>
            <person name="Okamura-Oho Y."/>
            <person name="Suzuki H."/>
            <person name="Kawai J."/>
            <person name="Hayashizaki Y."/>
        </authorList>
    </citation>
    <scope>NUCLEOTIDE SEQUENCE [LARGE SCALE MRNA] (ISOFORM 1)</scope>
    <source>
        <strain>C57BL/6J</strain>
    </source>
</reference>
<reference evidence="6 7" key="3">
    <citation type="journal article" date="2004" name="Genome Res.">
        <title>The status, quality, and expansion of the NIH full-length cDNA project: the Mammalian Gene Collection (MGC).</title>
        <authorList>
            <consortium name="The MGC Project Team"/>
        </authorList>
    </citation>
    <scope>NUCLEOTIDE SEQUENCE [LARGE SCALE MRNA] (ISOFORMS 2 AND 3)</scope>
    <source>
        <strain evidence="7">Czech II</strain>
        <strain evidence="8">FVB/N</strain>
        <tissue evidence="8">Kidney</tissue>
        <tissue evidence="7">Mammary tumor</tissue>
    </source>
</reference>
<reference key="4">
    <citation type="journal article" date="1997" name="Mol. Cell. Biol.">
        <title>E2a-Pbx1 induces aberrant expression of tissue-specific and developmentally regulated genes when expressed in NIH 3T3 fibroblasts.</title>
        <authorList>
            <person name="Fu X."/>
            <person name="Kamps M.P."/>
        </authorList>
    </citation>
    <scope>NUCLEOTIDE SEQUENCE [MRNA] OF 652-727 (ISOFORMS 1/3)</scope>
    <scope>DEVELOPMENTAL STAGE</scope>
</reference>
<reference key="5">
    <citation type="journal article" date="2010" name="Cell">
        <title>A tissue-specific atlas of mouse protein phosphorylation and expression.</title>
        <authorList>
            <person name="Huttlin E.L."/>
            <person name="Jedrychowski M.P."/>
            <person name="Elias J.E."/>
            <person name="Goswami T."/>
            <person name="Rad R."/>
            <person name="Beausoleil S.A."/>
            <person name="Villen J."/>
            <person name="Haas W."/>
            <person name="Sowa M.E."/>
            <person name="Gygi S.P."/>
        </authorList>
    </citation>
    <scope>IDENTIFICATION BY MASS SPECTROMETRY [LARGE SCALE ANALYSIS]</scope>
    <source>
        <tissue>Kidney</tissue>
    </source>
</reference>
<evidence type="ECO:0000250" key="1">
    <source>
        <dbReference type="UniProtKB" id="O15195"/>
    </source>
</evidence>
<evidence type="ECO:0000255" key="2"/>
<evidence type="ECO:0000255" key="3">
    <source>
        <dbReference type="PROSITE-ProRule" id="PRU00595"/>
    </source>
</evidence>
<evidence type="ECO:0000269" key="4">
    <source>
    </source>
</evidence>
<evidence type="ECO:0000303" key="5">
    <source>
    </source>
</evidence>
<evidence type="ECO:0000305" key="6"/>
<evidence type="ECO:0000312" key="7">
    <source>
        <dbReference type="EMBL" id="AAH21808.1"/>
    </source>
</evidence>
<evidence type="ECO:0000312" key="8">
    <source>
        <dbReference type="EMBL" id="AAH22664.1"/>
    </source>
</evidence>
<evidence type="ECO:0000312" key="9">
    <source>
        <dbReference type="EMBL" id="CAC69079.1"/>
    </source>
</evidence>
<evidence type="ECO:0000312" key="10">
    <source>
        <dbReference type="MGI" id="MGI:1201781"/>
    </source>
</evidence>
<gene>
    <name evidence="10" type="primary">Vill</name>
    <name evidence="10" type="synonym">Villp</name>
</gene>
<comment type="function">
    <text evidence="1">Possible tumor suppressor.</text>
</comment>
<comment type="alternative products">
    <event type="alternative splicing"/>
    <isoform>
        <id>Q91YD6-1</id>
        <name>1</name>
        <sequence type="displayed"/>
    </isoform>
    <isoform>
        <id>Q91YD6-2</id>
        <name evidence="6">2</name>
        <sequence type="described" ref="VSP_051691 VSP_051692"/>
    </isoform>
    <isoform>
        <id>Q91YD6-3</id>
        <name evidence="6">3</name>
        <sequence type="described" ref="VSP_051690"/>
    </isoform>
</comment>
<comment type="developmental stage">
    <text evidence="4">Not detected in adult tissues. Expressed at low levels in early embryogenesis.</text>
</comment>
<comment type="similarity">
    <text evidence="2">Belongs to the villin/gelsolin family.</text>
</comment>
<dbReference type="EMBL" id="AJ344341">
    <property type="protein sequence ID" value="CAC69079.1"/>
    <property type="molecule type" value="mRNA"/>
</dbReference>
<dbReference type="EMBL" id="AK028229">
    <property type="protein sequence ID" value="BAC25828.1"/>
    <property type="molecule type" value="mRNA"/>
</dbReference>
<dbReference type="EMBL" id="BC021808">
    <property type="protein sequence ID" value="AAH21808.1"/>
    <property type="molecule type" value="mRNA"/>
</dbReference>
<dbReference type="EMBL" id="BC022664">
    <property type="protein sequence ID" value="AAH22664.1"/>
    <property type="molecule type" value="mRNA"/>
</dbReference>
<dbReference type="EMBL" id="U72681">
    <property type="protein sequence ID" value="AAB51041.1"/>
    <property type="molecule type" value="mRNA"/>
</dbReference>
<dbReference type="CCDS" id="CCDS23606.1">
    <molecule id="Q91YD6-2"/>
</dbReference>
<dbReference type="CCDS" id="CCDS52962.1">
    <molecule id="Q91YD6-1"/>
</dbReference>
<dbReference type="RefSeq" id="NP_001158039.1">
    <property type="nucleotide sequence ID" value="NM_001164567.1"/>
</dbReference>
<dbReference type="RefSeq" id="NP_035830.2">
    <property type="nucleotide sequence ID" value="NM_011700.2"/>
</dbReference>
<dbReference type="SMR" id="Q91YD6"/>
<dbReference type="BioGRID" id="204523">
    <property type="interactions" value="5"/>
</dbReference>
<dbReference type="FunCoup" id="Q91YD6">
    <property type="interactions" value="10"/>
</dbReference>
<dbReference type="STRING" id="10090.ENSMUSP00000061731"/>
<dbReference type="iPTMnet" id="Q91YD6"/>
<dbReference type="PhosphoSitePlus" id="Q91YD6"/>
<dbReference type="jPOST" id="Q91YD6"/>
<dbReference type="PaxDb" id="10090-ENSMUSP00000061731"/>
<dbReference type="ProteomicsDB" id="297597">
    <molecule id="Q91YD6-1"/>
</dbReference>
<dbReference type="ProteomicsDB" id="297598">
    <molecule id="Q91YD6-2"/>
</dbReference>
<dbReference type="ProteomicsDB" id="297599">
    <molecule id="Q91YD6-3"/>
</dbReference>
<dbReference type="Antibodypedia" id="48930">
    <property type="antibodies" value="100 antibodies from 22 providers"/>
</dbReference>
<dbReference type="DNASU" id="22351"/>
<dbReference type="Ensembl" id="ENSMUST00000141185.8">
    <molecule id="Q91YD6-3"/>
    <property type="protein sequence ID" value="ENSMUSP00000116546.2"/>
    <property type="gene ID" value="ENSMUSG00000038775.15"/>
</dbReference>
<dbReference type="GeneID" id="22351"/>
<dbReference type="KEGG" id="mmu:22351"/>
<dbReference type="AGR" id="MGI:1201781"/>
<dbReference type="CTD" id="50853"/>
<dbReference type="MGI" id="MGI:1201781">
    <property type="gene designation" value="Vill"/>
</dbReference>
<dbReference type="VEuPathDB" id="HostDB:ENSMUSG00000038775"/>
<dbReference type="eggNOG" id="KOG0443">
    <property type="taxonomic scope" value="Eukaryota"/>
</dbReference>
<dbReference type="GeneTree" id="ENSGT00940000160253"/>
<dbReference type="InParanoid" id="Q91YD6"/>
<dbReference type="OrthoDB" id="6375767at2759"/>
<dbReference type="PhylomeDB" id="Q91YD6"/>
<dbReference type="BioGRID-ORCS" id="22351">
    <property type="hits" value="4 hits in 77 CRISPR screens"/>
</dbReference>
<dbReference type="PRO" id="PR:Q91YD6"/>
<dbReference type="Proteomes" id="UP000000589">
    <property type="component" value="Chromosome 9"/>
</dbReference>
<dbReference type="RNAct" id="Q91YD6">
    <property type="molecule type" value="protein"/>
</dbReference>
<dbReference type="Bgee" id="ENSMUSG00000038775">
    <property type="expression patterns" value="Expressed in granulocyte and 166 other cell types or tissues"/>
</dbReference>
<dbReference type="ExpressionAtlas" id="Q91YD6">
    <property type="expression patterns" value="baseline and differential"/>
</dbReference>
<dbReference type="GO" id="GO:0051015">
    <property type="term" value="F:actin filament binding"/>
    <property type="evidence" value="ECO:0007669"/>
    <property type="project" value="InterPro"/>
</dbReference>
<dbReference type="GO" id="GO:0051693">
    <property type="term" value="P:actin filament capping"/>
    <property type="evidence" value="ECO:0007669"/>
    <property type="project" value="UniProtKB-KW"/>
</dbReference>
<dbReference type="GO" id="GO:0007010">
    <property type="term" value="P:cytoskeleton organization"/>
    <property type="evidence" value="ECO:0007669"/>
    <property type="project" value="InterPro"/>
</dbReference>
<dbReference type="CDD" id="cd11290">
    <property type="entry name" value="gelsolin_S1_like"/>
    <property type="match status" value="1"/>
</dbReference>
<dbReference type="CDD" id="cd11289">
    <property type="entry name" value="gelsolin_S2_like"/>
    <property type="match status" value="1"/>
</dbReference>
<dbReference type="CDD" id="cd11292">
    <property type="entry name" value="gelsolin_S3_like"/>
    <property type="match status" value="1"/>
</dbReference>
<dbReference type="CDD" id="cd11293">
    <property type="entry name" value="gelsolin_S4_like"/>
    <property type="match status" value="1"/>
</dbReference>
<dbReference type="CDD" id="cd11288">
    <property type="entry name" value="gelsolin_S5_like"/>
    <property type="match status" value="1"/>
</dbReference>
<dbReference type="CDD" id="cd11291">
    <property type="entry name" value="gelsolin_S6_like"/>
    <property type="match status" value="1"/>
</dbReference>
<dbReference type="FunFam" id="3.40.20.10:FF:000001">
    <property type="entry name" value="Gelsolin"/>
    <property type="match status" value="1"/>
</dbReference>
<dbReference type="FunFam" id="3.40.20.10:FF:000005">
    <property type="entry name" value="Gelsolin"/>
    <property type="match status" value="1"/>
</dbReference>
<dbReference type="FunFam" id="3.40.20.10:FF:000027">
    <property type="entry name" value="Villin 1"/>
    <property type="match status" value="1"/>
</dbReference>
<dbReference type="Gene3D" id="3.40.20.10">
    <property type="entry name" value="Severin"/>
    <property type="match status" value="6"/>
</dbReference>
<dbReference type="Gene3D" id="1.10.950.10">
    <property type="entry name" value="Villin headpiece domain"/>
    <property type="match status" value="1"/>
</dbReference>
<dbReference type="InterPro" id="IPR029006">
    <property type="entry name" value="ADF-H/Gelsolin-like_dom_sf"/>
</dbReference>
<dbReference type="InterPro" id="IPR007123">
    <property type="entry name" value="Gelsolin-like_dom"/>
</dbReference>
<dbReference type="InterPro" id="IPR036180">
    <property type="entry name" value="Gelsolin-like_dom_sf"/>
</dbReference>
<dbReference type="InterPro" id="IPR007122">
    <property type="entry name" value="Villin/Gelsolin"/>
</dbReference>
<dbReference type="InterPro" id="IPR003128">
    <property type="entry name" value="Villin_headpiece"/>
</dbReference>
<dbReference type="InterPro" id="IPR036886">
    <property type="entry name" value="Villin_headpiece_dom_sf"/>
</dbReference>
<dbReference type="PANTHER" id="PTHR11977">
    <property type="entry name" value="VILLIN"/>
    <property type="match status" value="1"/>
</dbReference>
<dbReference type="PANTHER" id="PTHR11977:SF30">
    <property type="entry name" value="VILLIN-LIKE PROTEIN"/>
    <property type="match status" value="1"/>
</dbReference>
<dbReference type="Pfam" id="PF00626">
    <property type="entry name" value="Gelsolin"/>
    <property type="match status" value="5"/>
</dbReference>
<dbReference type="Pfam" id="PF02209">
    <property type="entry name" value="VHP"/>
    <property type="match status" value="1"/>
</dbReference>
<dbReference type="PRINTS" id="PR00597">
    <property type="entry name" value="GELSOLIN"/>
</dbReference>
<dbReference type="SMART" id="SM00262">
    <property type="entry name" value="GEL"/>
    <property type="match status" value="6"/>
</dbReference>
<dbReference type="SMART" id="SM00153">
    <property type="entry name" value="VHP"/>
    <property type="match status" value="1"/>
</dbReference>
<dbReference type="SUPFAM" id="SSF55753">
    <property type="entry name" value="Actin depolymerizing proteins"/>
    <property type="match status" value="4"/>
</dbReference>
<dbReference type="SUPFAM" id="SSF82754">
    <property type="entry name" value="C-terminal, gelsolin-like domain of Sec23/24"/>
    <property type="match status" value="2"/>
</dbReference>
<dbReference type="SUPFAM" id="SSF47050">
    <property type="entry name" value="VHP, Villin headpiece domain"/>
    <property type="match status" value="1"/>
</dbReference>
<dbReference type="PROSITE" id="PS51089">
    <property type="entry name" value="HP"/>
    <property type="match status" value="1"/>
</dbReference>
<proteinExistence type="evidence at protein level"/>
<feature type="chain" id="PRO_0000218739" description="Villin-like protein">
    <location>
        <begin position="1"/>
        <end position="859"/>
    </location>
</feature>
<feature type="repeat" description="Gelsolin-like 1" evidence="2">
    <location>
        <begin position="24"/>
        <end position="76"/>
    </location>
</feature>
<feature type="repeat" description="Gelsolin-like 2" evidence="2">
    <location>
        <begin position="148"/>
        <end position="188"/>
    </location>
</feature>
<feature type="repeat" description="Gelsolin-like 3" evidence="2">
    <location>
        <begin position="264"/>
        <end position="308"/>
    </location>
</feature>
<feature type="repeat" description="Gelsolin-like 4" evidence="2">
    <location>
        <begin position="401"/>
        <end position="450"/>
    </location>
</feature>
<feature type="repeat" description="Gelsolin-like 5" evidence="2">
    <location>
        <begin position="521"/>
        <end position="561"/>
    </location>
</feature>
<feature type="repeat" description="Gelsolin-like 6" evidence="2">
    <location>
        <begin position="624"/>
        <end position="665"/>
    </location>
</feature>
<feature type="domain" description="HP" evidence="3">
    <location>
        <begin position="793"/>
        <end position="859"/>
    </location>
</feature>
<feature type="splice variant" id="VSP_051690" description="In isoform 3." evidence="5">
    <location>
        <begin position="1"/>
        <end position="384"/>
    </location>
</feature>
<feature type="splice variant" id="VSP_051691" description="In isoform 2." evidence="5">
    <location>
        <begin position="651"/>
        <end position="712"/>
    </location>
</feature>
<feature type="splice variant" id="VSP_051692" description="In isoform 2." evidence="5">
    <location>
        <begin position="737"/>
        <end position="758"/>
    </location>
</feature>
<feature type="sequence conflict" description="In Ref. 2; BAC25828." evidence="6" ref="2">
    <original>S</original>
    <variation>F</variation>
    <location>
        <position position="59"/>
    </location>
</feature>
<feature type="sequence conflict" description="In Ref. 2; BAC25828." evidence="6" ref="2">
    <original>E</original>
    <variation>K</variation>
    <location>
        <position position="73"/>
    </location>
</feature>
<feature type="sequence conflict" description="In Ref. 3; AAH21808." evidence="6" ref="3">
    <original>C</original>
    <variation>S</variation>
    <location>
        <position position="84"/>
    </location>
</feature>
<feature type="sequence conflict" description="In Ref. 3; AAH21808." evidence="6" ref="3">
    <original>F</original>
    <variation>L</variation>
    <location>
        <position position="128"/>
    </location>
</feature>
<feature type="sequence conflict" description="In Ref. 2; BAC25828." evidence="6" ref="2">
    <original>K</original>
    <variation>R</variation>
    <location>
        <position position="143"/>
    </location>
</feature>
<feature type="sequence conflict" description="In Ref. 3; AAH21808." evidence="6" ref="3">
    <original>L</original>
    <variation>V</variation>
    <location>
        <position position="167"/>
    </location>
</feature>
<feature type="sequence conflict" description="In Ref. 3; AAH21808." evidence="6" ref="3">
    <original>P</original>
    <variation>S</variation>
    <location>
        <position position="304"/>
    </location>
</feature>
<feature type="sequence conflict" description="In Ref. 2; BAC25828." evidence="6" ref="2">
    <original>T</original>
    <variation>N</variation>
    <location>
        <position position="375"/>
    </location>
</feature>
<feature type="sequence conflict" description="In Ref. 3; AAH21808." evidence="6" ref="3">
    <original>H</original>
    <variation>D</variation>
    <location>
        <position position="407"/>
    </location>
</feature>
<feature type="sequence conflict" description="In Ref. 3; AAH21808." evidence="6" ref="3">
    <original>Y</original>
    <variation>H</variation>
    <location>
        <position position="410"/>
    </location>
</feature>
<feature type="sequence conflict" description="In Ref. 3; AAH21808." evidence="6" ref="3">
    <original>S</original>
    <variation>T</variation>
    <location>
        <position position="568"/>
    </location>
</feature>
<feature type="sequence conflict" description="In Ref. 3; AAH21808." evidence="6" ref="3">
    <original>A</original>
    <variation>T</variation>
    <location>
        <position position="621"/>
    </location>
</feature>
<sequence length="859" mass="96509">MDINQDLPAIDSHRALQIWITENLKMLPLPERAHGNFFEECCYVVLHVPQSPKATQGGSSDLHYWIGKDASAEAREAAVSFVQCLQEDLGDQTVLHRESQGHESDCFHSYFHPGVIYRKGGRDSALKFAETNMYNVQRLLHIKGRKHVSATEVALSWNSFNKGDIFLLDLGKVMIQWNGPKASISEKARALTLTCNLRDRERGGRAQIAVVDAENEATNLLRIMEAVLGCRSGSLCPSVPSNSVSQLQKANVRLYHVCEKGTDLVVQELATRPLTQDLLQEDGCYLLDQGGFKIYMWQGRKSSPQEKKAALSRAVGFIQAKGYPNYTNVEVVNDGAESTAFQQLFWSWSKELDRKKHPEKSKLVQGNLEVGKLHTQPELAAQLRMVDDGSGKVEVWYIQDLQRQPVHPKYYGQLCSGNCYLVLYTYQKLGCVQYLLYLWQGHQSTVEDTKALNCSAEELDLMHQGALAQGHVTMGSEPPHFLAIFQGRLVVFQGNAGNKGERPPVSDTRLFHVQGTESHNTRTMEVPARASSLTSGDVFFLITSHVCYLWFGKGCHGDQREMARTVVSVFPGNNKETVLEGQEPLYFWEALGGRAPYPSNKRLPEEVWSIQPRLFECSSHAGCLVLTEVLFFGQEDLDKYDIMLLDTCQEIFLWLGEAAGEWKKEAVAWGLEYLRTHPAERSLATPIFVVKQGHEPATFTGWFVTWDPYKWMNSQSYEEMVGNSLGPGSAISEMTAEVHNFQLTPRLSDNKAGHPALQAFKGSQDSPENELGLDLRVDGANPSMNHTSSCSDSMVNGSLPRERLMHQALEDLPPGVDPARKEFYLSDSDFQDIFGKSKEEFYSMAKWKQQQAKKKLGFF</sequence>
<protein>
    <recommendedName>
        <fullName>Villin-like protein</fullName>
    </recommendedName>
    <alternativeName>
        <fullName>EF-6</fullName>
    </alternativeName>
</protein>
<name>VILL_MOUSE</name>